<sequence>MSSAGVLTCIPDSGPIFRETSLRPPVPGQETNNFKPEKFTMDSQHLKHKEDFNREAEGCVAHDSRFSRWGRSLNLLLDDQDGATLFRMYLEGEGLGDLLTFWFACNGFRAMDPLEPKTSKTAKAIYRWYVQNSSAVSGRLKPTTRTQVKECVKNHQLNKTVFDQAQQEIQRAMEQEAFTSFLQSDICKEYARGVEDSPTPESPGPGLPTLTEDEEFGGLHHFSSGMGKINRAFSRIPPRNQRSHFRKLEQTYQYFAPAASINDSEISSDALTEDSMSMTDGSVDGIPPYRSKKQREIHRSVSANGKVSLPFVPRTMRPPAEMMPTSPAEFAAKLTIALEKVKKQRDAEEKLEEKLQRLKEEEEIADYDIPSSSHETVPGAALEDDPQSILDDHVSRVLKTPANLSPRSQSPFVQRKGKFQPAFSKGQTSTSCHLRPKVPQGMEATSTLASELRSSVSSQLPRSSRKPEGCTQPHRPEEGTSAAVLTTPLSPEQEAERNHSVLQWVLDSAKLMKKHHRETASVTPCPELKKATHRAASQPAHLFLQDTSMPPLTAPNTLDQLEEARRRLVEDKRVPKLHKSRCVQSTTLKEKGKTAESVPSSGFSTLKLSEEQKTAKKPSSECPGQGLAIVYYFCGERIPYMIRTKEPSLTLQEFKELLSKKGSNKYYFKKESHEFECNAVFQEVSEEDAVLPLFEEKIICKVERAC</sequence>
<keyword id="KW-0963">Cytoplasm</keyword>
<keyword id="KW-0968">Cytoplasmic vesicle</keyword>
<keyword id="KW-0217">Developmental protein</keyword>
<keyword id="KW-1185">Reference proteome</keyword>
<keyword id="KW-0879">Wnt signaling pathway</keyword>
<comment type="function">
    <text evidence="4">Regulates the wnt signaling pathway by interacting with dvl2/dsh, which displaces gsk3b from the axnr-gsk3b complex and thus prevents degradation of ctnnb1/beta-catenin.</text>
</comment>
<comment type="subunit">
    <text evidence="4">Interacts with dvl2/dsh via DIX domains in both proteins. Forms a complex with ctnnb1/beta-catenin and gsk3b. Also forms heterodimers with mouse Axin1.</text>
</comment>
<comment type="subcellular location">
    <subcellularLocation>
        <location evidence="4">Cytoplasm</location>
    </subcellularLocation>
    <subcellularLocation>
        <location evidence="4">Cytoplasmic vesicle</location>
    </subcellularLocation>
</comment>
<comment type="developmental stage">
    <text evidence="4">Expressed maternally.</text>
</comment>
<organism>
    <name type="scientific">Xenopus laevis</name>
    <name type="common">African clawed frog</name>
    <dbReference type="NCBI Taxonomy" id="8355"/>
    <lineage>
        <taxon>Eukaryota</taxon>
        <taxon>Metazoa</taxon>
        <taxon>Chordata</taxon>
        <taxon>Craniata</taxon>
        <taxon>Vertebrata</taxon>
        <taxon>Euteleostomi</taxon>
        <taxon>Amphibia</taxon>
        <taxon>Batrachia</taxon>
        <taxon>Anura</taxon>
        <taxon>Pipoidea</taxon>
        <taxon>Pipidae</taxon>
        <taxon>Xenopodinae</taxon>
        <taxon>Xenopus</taxon>
        <taxon>Xenopus</taxon>
    </lineage>
</organism>
<feature type="chain" id="PRO_0000286587" description="Axin-related protein">
    <location>
        <begin position="1"/>
        <end position="706"/>
    </location>
</feature>
<feature type="domain" description="RGS" evidence="2">
    <location>
        <begin position="72"/>
        <end position="191"/>
    </location>
</feature>
<feature type="domain" description="DIX" evidence="1">
    <location>
        <begin position="624"/>
        <end position="706"/>
    </location>
</feature>
<feature type="region of interest" description="Disordered" evidence="3">
    <location>
        <begin position="278"/>
        <end position="298"/>
    </location>
</feature>
<feature type="region of interest" description="Disordered" evidence="3">
    <location>
        <begin position="400"/>
        <end position="482"/>
    </location>
</feature>
<feature type="region of interest" description="Disordered" evidence="3">
    <location>
        <begin position="585"/>
        <end position="605"/>
    </location>
</feature>
<feature type="compositionally biased region" description="Polar residues" evidence="3">
    <location>
        <begin position="402"/>
        <end position="412"/>
    </location>
</feature>
<feature type="compositionally biased region" description="Low complexity" evidence="3">
    <location>
        <begin position="453"/>
        <end position="462"/>
    </location>
</feature>
<accession>Q9PTP2</accession>
<protein>
    <recommendedName>
        <fullName>Axin-related protein</fullName>
        <shortName>xARP</shortName>
    </recommendedName>
</protein>
<dbReference type="EMBL" id="AF140243">
    <property type="protein sequence ID" value="AAF22574.1"/>
    <property type="molecule type" value="mRNA"/>
</dbReference>
<dbReference type="RefSeq" id="NP_001079086.1">
    <property type="nucleotide sequence ID" value="NM_001085617.1"/>
</dbReference>
<dbReference type="SMR" id="Q9PTP2"/>
<dbReference type="GeneID" id="373619"/>
<dbReference type="KEGG" id="xla:373619"/>
<dbReference type="AGR" id="Xenbase:XB-GENE-6252887"/>
<dbReference type="CTD" id="373619"/>
<dbReference type="Xenbase" id="XB-GENE-6252887">
    <property type="gene designation" value="axin2l.L"/>
</dbReference>
<dbReference type="OrthoDB" id="10007451at2759"/>
<dbReference type="Proteomes" id="UP000186698">
    <property type="component" value="Chromosome 7L"/>
</dbReference>
<dbReference type="Bgee" id="373619">
    <property type="expression patterns" value="Expressed in gastrula and 18 other cell types or tissues"/>
</dbReference>
<dbReference type="GO" id="GO:0030877">
    <property type="term" value="C:beta-catenin destruction complex"/>
    <property type="evidence" value="ECO:0000318"/>
    <property type="project" value="GO_Central"/>
</dbReference>
<dbReference type="GO" id="GO:0031410">
    <property type="term" value="C:cytoplasmic vesicle"/>
    <property type="evidence" value="ECO:0000314"/>
    <property type="project" value="UniProtKB"/>
</dbReference>
<dbReference type="GO" id="GO:0005634">
    <property type="term" value="C:nucleus"/>
    <property type="evidence" value="ECO:0000318"/>
    <property type="project" value="GO_Central"/>
</dbReference>
<dbReference type="GO" id="GO:0005886">
    <property type="term" value="C:plasma membrane"/>
    <property type="evidence" value="ECO:0000318"/>
    <property type="project" value="GO_Central"/>
</dbReference>
<dbReference type="GO" id="GO:0008013">
    <property type="term" value="F:beta-catenin binding"/>
    <property type="evidence" value="ECO:0000318"/>
    <property type="project" value="GO_Central"/>
</dbReference>
<dbReference type="GO" id="GO:0070411">
    <property type="term" value="F:I-SMAD binding"/>
    <property type="evidence" value="ECO:0000318"/>
    <property type="project" value="GO_Central"/>
</dbReference>
<dbReference type="GO" id="GO:0060090">
    <property type="term" value="F:molecular adaptor activity"/>
    <property type="evidence" value="ECO:0000318"/>
    <property type="project" value="GO_Central"/>
</dbReference>
<dbReference type="GO" id="GO:0019901">
    <property type="term" value="F:protein kinase binding"/>
    <property type="evidence" value="ECO:0000318"/>
    <property type="project" value="GO_Central"/>
</dbReference>
<dbReference type="GO" id="GO:0031625">
    <property type="term" value="F:ubiquitin protein ligase binding"/>
    <property type="evidence" value="ECO:0000318"/>
    <property type="project" value="GO_Central"/>
</dbReference>
<dbReference type="GO" id="GO:0048468">
    <property type="term" value="P:cell development"/>
    <property type="evidence" value="ECO:0000318"/>
    <property type="project" value="GO_Central"/>
</dbReference>
<dbReference type="GO" id="GO:0090090">
    <property type="term" value="P:negative regulation of canonical Wnt signaling pathway"/>
    <property type="evidence" value="ECO:0000318"/>
    <property type="project" value="GO_Central"/>
</dbReference>
<dbReference type="GO" id="GO:0032436">
    <property type="term" value="P:positive regulation of proteasomal ubiquitin-dependent protein catabolic process"/>
    <property type="evidence" value="ECO:0000318"/>
    <property type="project" value="GO_Central"/>
</dbReference>
<dbReference type="GO" id="GO:0070602">
    <property type="term" value="P:regulation of centromeric sister chromatid cohesion"/>
    <property type="evidence" value="ECO:0000318"/>
    <property type="project" value="GO_Central"/>
</dbReference>
<dbReference type="GO" id="GO:0030111">
    <property type="term" value="P:regulation of Wnt signaling pathway"/>
    <property type="evidence" value="ECO:0000353"/>
    <property type="project" value="UniProtKB"/>
</dbReference>
<dbReference type="GO" id="GO:0016055">
    <property type="term" value="P:Wnt signaling pathway"/>
    <property type="evidence" value="ECO:0007669"/>
    <property type="project" value="UniProtKB-KW"/>
</dbReference>
<dbReference type="CDD" id="cd08707">
    <property type="entry name" value="RGS_Axin"/>
    <property type="match status" value="1"/>
</dbReference>
<dbReference type="Gene3D" id="1.10.196.10">
    <property type="match status" value="1"/>
</dbReference>
<dbReference type="Gene3D" id="2.40.240.130">
    <property type="match status" value="1"/>
</dbReference>
<dbReference type="Gene3D" id="1.10.167.10">
    <property type="entry name" value="Regulator of G-protein Signalling 4, domain 2"/>
    <property type="match status" value="1"/>
</dbReference>
<dbReference type="InterPro" id="IPR043581">
    <property type="entry name" value="Axin-like"/>
</dbReference>
<dbReference type="InterPro" id="IPR014936">
    <property type="entry name" value="Axin_b-cat-bd"/>
</dbReference>
<dbReference type="InterPro" id="IPR001158">
    <property type="entry name" value="DIX"/>
</dbReference>
<dbReference type="InterPro" id="IPR038207">
    <property type="entry name" value="DIX_dom_sf"/>
</dbReference>
<dbReference type="InterPro" id="IPR016137">
    <property type="entry name" value="RGS"/>
</dbReference>
<dbReference type="InterPro" id="IPR036305">
    <property type="entry name" value="RGS_sf"/>
</dbReference>
<dbReference type="InterPro" id="IPR024066">
    <property type="entry name" value="RGS_subdom1/3"/>
</dbReference>
<dbReference type="InterPro" id="IPR044926">
    <property type="entry name" value="RGS_subdomain_2"/>
</dbReference>
<dbReference type="InterPro" id="IPR029071">
    <property type="entry name" value="Ubiquitin-like_domsf"/>
</dbReference>
<dbReference type="PANTHER" id="PTHR46102">
    <property type="entry name" value="AXIN"/>
    <property type="match status" value="1"/>
</dbReference>
<dbReference type="PANTHER" id="PTHR46102:SF4">
    <property type="entry name" value="AXIN-RELATED PROTEIN"/>
    <property type="match status" value="1"/>
</dbReference>
<dbReference type="Pfam" id="PF08833">
    <property type="entry name" value="Axin_b-cat_bind"/>
    <property type="match status" value="1"/>
</dbReference>
<dbReference type="Pfam" id="PF00778">
    <property type="entry name" value="DIX"/>
    <property type="match status" value="1"/>
</dbReference>
<dbReference type="Pfam" id="PF00615">
    <property type="entry name" value="RGS"/>
    <property type="match status" value="1"/>
</dbReference>
<dbReference type="PRINTS" id="PR01301">
    <property type="entry name" value="RGSPROTEIN"/>
</dbReference>
<dbReference type="SMART" id="SM00021">
    <property type="entry name" value="DAX"/>
    <property type="match status" value="1"/>
</dbReference>
<dbReference type="SMART" id="SM00315">
    <property type="entry name" value="RGS"/>
    <property type="match status" value="1"/>
</dbReference>
<dbReference type="SUPFAM" id="SSF48097">
    <property type="entry name" value="Regulator of G-protein signaling, RGS"/>
    <property type="match status" value="1"/>
</dbReference>
<dbReference type="SUPFAM" id="SSF54236">
    <property type="entry name" value="Ubiquitin-like"/>
    <property type="match status" value="1"/>
</dbReference>
<dbReference type="PROSITE" id="PS50841">
    <property type="entry name" value="DIX"/>
    <property type="match status" value="1"/>
</dbReference>
<dbReference type="PROSITE" id="PS50132">
    <property type="entry name" value="RGS"/>
    <property type="match status" value="1"/>
</dbReference>
<name>AXNR_XENLA</name>
<reference evidence="5 6" key="1">
    <citation type="journal article" date="2000" name="Mol. Cell. Biol.">
        <title>Interaction of dishevelled and Xenopus axin-related protein is required for wnt signal transduction.</title>
        <authorList>
            <person name="Itoh K."/>
            <person name="Antipova A."/>
            <person name="Ratcliffe M.J."/>
            <person name="Sokol S.Y."/>
        </authorList>
    </citation>
    <scope>NUCLEOTIDE SEQUENCE [MRNA]</scope>
    <scope>FUNCTION</scope>
    <scope>INTERACTION WITH AXIN1 AND DVL2</scope>
    <scope>IDENTIFICATION IN A COMPLEX WITH CTNNB1 AND GSK3B</scope>
    <scope>SUBCELLULAR LOCATION</scope>
    <scope>DEVELOPMENTAL STAGE</scope>
    <source>
        <tissue evidence="6">Ovary</tissue>
    </source>
</reference>
<proteinExistence type="evidence at protein level"/>
<evidence type="ECO:0000255" key="1">
    <source>
        <dbReference type="PROSITE-ProRule" id="PRU00069"/>
    </source>
</evidence>
<evidence type="ECO:0000255" key="2">
    <source>
        <dbReference type="PROSITE-ProRule" id="PRU00171"/>
    </source>
</evidence>
<evidence type="ECO:0000256" key="3">
    <source>
        <dbReference type="SAM" id="MobiDB-lite"/>
    </source>
</evidence>
<evidence type="ECO:0000269" key="4">
    <source>
    </source>
</evidence>
<evidence type="ECO:0000305" key="5"/>
<evidence type="ECO:0000312" key="6">
    <source>
        <dbReference type="EMBL" id="AAF22574.1"/>
    </source>
</evidence>